<accession>B4SWG1</accession>
<protein>
    <recommendedName>
        <fullName evidence="1">C4-dicarboxylate transport protein</fullName>
    </recommendedName>
</protein>
<gene>
    <name evidence="1" type="primary">dctA</name>
    <name type="ordered locus">SNSL254_A3886</name>
</gene>
<dbReference type="EMBL" id="CP001113">
    <property type="protein sequence ID" value="ACF63539.1"/>
    <property type="molecule type" value="Genomic_DNA"/>
</dbReference>
<dbReference type="RefSeq" id="WP_000858228.1">
    <property type="nucleotide sequence ID" value="NZ_CCMR01000004.1"/>
</dbReference>
<dbReference type="SMR" id="B4SWG1"/>
<dbReference type="KEGG" id="see:SNSL254_A3886"/>
<dbReference type="HOGENOM" id="CLU_019375_7_0_6"/>
<dbReference type="Proteomes" id="UP000008824">
    <property type="component" value="Chromosome"/>
</dbReference>
<dbReference type="GO" id="GO:0005886">
    <property type="term" value="C:plasma membrane"/>
    <property type="evidence" value="ECO:0007669"/>
    <property type="project" value="UniProtKB-SubCell"/>
</dbReference>
<dbReference type="GO" id="GO:0015138">
    <property type="term" value="F:fumarate transmembrane transporter activity"/>
    <property type="evidence" value="ECO:0007669"/>
    <property type="project" value="TreeGrafter"/>
</dbReference>
<dbReference type="GO" id="GO:0015366">
    <property type="term" value="F:malate:proton symporter activity"/>
    <property type="evidence" value="ECO:0007669"/>
    <property type="project" value="TreeGrafter"/>
</dbReference>
<dbReference type="GO" id="GO:0015141">
    <property type="term" value="F:succinate transmembrane transporter activity"/>
    <property type="evidence" value="ECO:0007669"/>
    <property type="project" value="TreeGrafter"/>
</dbReference>
<dbReference type="GO" id="GO:0070778">
    <property type="term" value="P:L-aspartate transmembrane transport"/>
    <property type="evidence" value="ECO:0007669"/>
    <property type="project" value="TreeGrafter"/>
</dbReference>
<dbReference type="FunFam" id="1.10.3860.10:FF:000001">
    <property type="entry name" value="C4-dicarboxylate transport protein"/>
    <property type="match status" value="1"/>
</dbReference>
<dbReference type="Gene3D" id="1.10.3860.10">
    <property type="entry name" value="Sodium:dicarboxylate symporter"/>
    <property type="match status" value="1"/>
</dbReference>
<dbReference type="HAMAP" id="MF_01300">
    <property type="entry name" value="C4_dicarb_transport"/>
    <property type="match status" value="1"/>
</dbReference>
<dbReference type="InterPro" id="IPR023954">
    <property type="entry name" value="C4_dicarb_transport"/>
</dbReference>
<dbReference type="InterPro" id="IPR001991">
    <property type="entry name" value="Na-dicarboxylate_symporter"/>
</dbReference>
<dbReference type="InterPro" id="IPR018107">
    <property type="entry name" value="Na-dicarboxylate_symporter_CS"/>
</dbReference>
<dbReference type="InterPro" id="IPR036458">
    <property type="entry name" value="Na:dicarbo_symporter_sf"/>
</dbReference>
<dbReference type="NCBIfam" id="NF002461">
    <property type="entry name" value="PRK01663.1"/>
    <property type="match status" value="1"/>
</dbReference>
<dbReference type="NCBIfam" id="NF009587">
    <property type="entry name" value="PRK13027.1"/>
    <property type="match status" value="1"/>
</dbReference>
<dbReference type="PANTHER" id="PTHR42865:SF1">
    <property type="entry name" value="AEROBIC C4-DICARBOXYLATE TRANSPORT PROTEIN"/>
    <property type="match status" value="1"/>
</dbReference>
<dbReference type="PANTHER" id="PTHR42865">
    <property type="entry name" value="PROTON/GLUTAMATE-ASPARTATE SYMPORTER"/>
    <property type="match status" value="1"/>
</dbReference>
<dbReference type="Pfam" id="PF00375">
    <property type="entry name" value="SDF"/>
    <property type="match status" value="1"/>
</dbReference>
<dbReference type="PRINTS" id="PR00173">
    <property type="entry name" value="EDTRNSPORT"/>
</dbReference>
<dbReference type="SUPFAM" id="SSF118215">
    <property type="entry name" value="Proton glutamate symport protein"/>
    <property type="match status" value="1"/>
</dbReference>
<dbReference type="PROSITE" id="PS00713">
    <property type="entry name" value="NA_DICARBOXYL_SYMP_1"/>
    <property type="match status" value="1"/>
</dbReference>
<dbReference type="PROSITE" id="PS00714">
    <property type="entry name" value="NA_DICARBOXYL_SYMP_2"/>
    <property type="match status" value="1"/>
</dbReference>
<evidence type="ECO:0000255" key="1">
    <source>
        <dbReference type="HAMAP-Rule" id="MF_01300"/>
    </source>
</evidence>
<sequence length="428" mass="45449">MKTSLFKSLYFQVLTAIAIGILLGHYYPELGAQMKPLGDAFVKLIKMIIAPVIFCTVVTGIAGMESMKAVGRTGAVALLYFEIVSTIALIIGLIIVNVVQPGAGMNVDPATLDAQAVAVYAAQAKEQGIIAFLMDVIPGSVIGAFASGNILQVLLFAVLFGFALHRLGSKGQLIFNVIESFSQVIFGIINMIMRLAPIGAFGAMAFTIGKYGVGSLVQLGQLIICFYITCILFVVVVLGTIARVTGFSIFKFIRYIREELLIVLGTSSSESALPRMLDKMEKLGCRKSVVGLVIPTGYSFNLDGTSIYLTMAAVFIAQATNSHMDIFHQITLLVVLLLSSKGAAGVTGSGFIVLAATISAVGHLPVAGLALILGIDRFMSEARALTNLVGNGVATVVVAKWVKELDHQKLDDVLNNRAPDGKTHEISS</sequence>
<proteinExistence type="inferred from homology"/>
<comment type="function">
    <text evidence="1">Responsible for the transport of dicarboxylates such as succinate, fumarate, and malate from the periplasm across the membrane.</text>
</comment>
<comment type="subcellular location">
    <subcellularLocation>
        <location evidence="1">Cell inner membrane</location>
        <topology evidence="1">Multi-pass membrane protein</topology>
    </subcellularLocation>
</comment>
<comment type="similarity">
    <text evidence="1">Belongs to the dicarboxylate/amino acid:cation symporter (DAACS) (TC 2.A.23) family.</text>
</comment>
<organism>
    <name type="scientific">Salmonella newport (strain SL254)</name>
    <dbReference type="NCBI Taxonomy" id="423368"/>
    <lineage>
        <taxon>Bacteria</taxon>
        <taxon>Pseudomonadati</taxon>
        <taxon>Pseudomonadota</taxon>
        <taxon>Gammaproteobacteria</taxon>
        <taxon>Enterobacterales</taxon>
        <taxon>Enterobacteriaceae</taxon>
        <taxon>Salmonella</taxon>
    </lineage>
</organism>
<reference key="1">
    <citation type="journal article" date="2011" name="J. Bacteriol.">
        <title>Comparative genomics of 28 Salmonella enterica isolates: evidence for CRISPR-mediated adaptive sublineage evolution.</title>
        <authorList>
            <person name="Fricke W.F."/>
            <person name="Mammel M.K."/>
            <person name="McDermott P.F."/>
            <person name="Tartera C."/>
            <person name="White D.G."/>
            <person name="Leclerc J.E."/>
            <person name="Ravel J."/>
            <person name="Cebula T.A."/>
        </authorList>
    </citation>
    <scope>NUCLEOTIDE SEQUENCE [LARGE SCALE GENOMIC DNA]</scope>
    <source>
        <strain>SL254</strain>
    </source>
</reference>
<name>DCTA_SALNS</name>
<keyword id="KW-0997">Cell inner membrane</keyword>
<keyword id="KW-1003">Cell membrane</keyword>
<keyword id="KW-0472">Membrane</keyword>
<keyword id="KW-0769">Symport</keyword>
<keyword id="KW-0812">Transmembrane</keyword>
<keyword id="KW-1133">Transmembrane helix</keyword>
<keyword id="KW-0813">Transport</keyword>
<feature type="chain" id="PRO_1000140468" description="C4-dicarboxylate transport protein">
    <location>
        <begin position="1"/>
        <end position="428"/>
    </location>
</feature>
<feature type="transmembrane region" description="Helical" evidence="1">
    <location>
        <begin position="4"/>
        <end position="24"/>
    </location>
</feature>
<feature type="transmembrane region" description="Helical" evidence="1">
    <location>
        <begin position="44"/>
        <end position="64"/>
    </location>
</feature>
<feature type="transmembrane region" description="Helical" evidence="1">
    <location>
        <begin position="76"/>
        <end position="96"/>
    </location>
</feature>
<feature type="transmembrane region" description="Helical" evidence="1">
    <location>
        <begin position="142"/>
        <end position="162"/>
    </location>
</feature>
<feature type="transmembrane region" description="Helical" evidence="1">
    <location>
        <begin position="184"/>
        <end position="204"/>
    </location>
</feature>
<feature type="transmembrane region" description="Helical" evidence="1">
    <location>
        <begin position="222"/>
        <end position="242"/>
    </location>
</feature>
<feature type="transmembrane region" description="Helical" evidence="1">
    <location>
        <begin position="289"/>
        <end position="309"/>
    </location>
</feature>
<feature type="transmembrane region" description="Helical" evidence="1">
    <location>
        <begin position="326"/>
        <end position="346"/>
    </location>
</feature>
<feature type="transmembrane region" description="Helical" evidence="1">
    <location>
        <begin position="352"/>
        <end position="372"/>
    </location>
</feature>